<protein>
    <recommendedName>
        <fullName evidence="5">Protein ABA AND ROS SENSITIVE 1</fullName>
    </recommendedName>
</protein>
<organism>
    <name type="scientific">Arabidopsis thaliana</name>
    <name type="common">Mouse-ear cress</name>
    <dbReference type="NCBI Taxonomy" id="3702"/>
    <lineage>
        <taxon>Eukaryota</taxon>
        <taxon>Viridiplantae</taxon>
        <taxon>Streptophyta</taxon>
        <taxon>Embryophyta</taxon>
        <taxon>Tracheophyta</taxon>
        <taxon>Spermatophyta</taxon>
        <taxon>Magnoliopsida</taxon>
        <taxon>eudicotyledons</taxon>
        <taxon>Gunneridae</taxon>
        <taxon>Pentapetalae</taxon>
        <taxon>rosids</taxon>
        <taxon>malvids</taxon>
        <taxon>Brassicales</taxon>
        <taxon>Brassicaceae</taxon>
        <taxon>Camelineae</taxon>
        <taxon>Arabidopsis</taxon>
    </lineage>
</organism>
<reference key="1">
    <citation type="journal article" date="2000" name="Nature">
        <title>Sequence and analysis of chromosome 3 of the plant Arabidopsis thaliana.</title>
        <authorList>
            <person name="Salanoubat M."/>
            <person name="Lemcke K."/>
            <person name="Rieger M."/>
            <person name="Ansorge W."/>
            <person name="Unseld M."/>
            <person name="Fartmann B."/>
            <person name="Valle G."/>
            <person name="Bloecker H."/>
            <person name="Perez-Alonso M."/>
            <person name="Obermaier B."/>
            <person name="Delseny M."/>
            <person name="Boutry M."/>
            <person name="Grivell L.A."/>
            <person name="Mache R."/>
            <person name="Puigdomenech P."/>
            <person name="De Simone V."/>
            <person name="Choisne N."/>
            <person name="Artiguenave F."/>
            <person name="Robert C."/>
            <person name="Brottier P."/>
            <person name="Wincker P."/>
            <person name="Cattolico L."/>
            <person name="Weissenbach J."/>
            <person name="Saurin W."/>
            <person name="Quetier F."/>
            <person name="Schaefer M."/>
            <person name="Mueller-Auer S."/>
            <person name="Gabel C."/>
            <person name="Fuchs M."/>
            <person name="Benes V."/>
            <person name="Wurmbach E."/>
            <person name="Drzonek H."/>
            <person name="Erfle H."/>
            <person name="Jordan N."/>
            <person name="Bangert S."/>
            <person name="Wiedelmann R."/>
            <person name="Kranz H."/>
            <person name="Voss H."/>
            <person name="Holland R."/>
            <person name="Brandt P."/>
            <person name="Nyakatura G."/>
            <person name="Vezzi A."/>
            <person name="D'Angelo M."/>
            <person name="Pallavicini A."/>
            <person name="Toppo S."/>
            <person name="Simionati B."/>
            <person name="Conrad A."/>
            <person name="Hornischer K."/>
            <person name="Kauer G."/>
            <person name="Loehnert T.-H."/>
            <person name="Nordsiek G."/>
            <person name="Reichelt J."/>
            <person name="Scharfe M."/>
            <person name="Schoen O."/>
            <person name="Bargues M."/>
            <person name="Terol J."/>
            <person name="Climent J."/>
            <person name="Navarro P."/>
            <person name="Collado C."/>
            <person name="Perez-Perez A."/>
            <person name="Ottenwaelder B."/>
            <person name="Duchemin D."/>
            <person name="Cooke R."/>
            <person name="Laudie M."/>
            <person name="Berger-Llauro C."/>
            <person name="Purnelle B."/>
            <person name="Masuy D."/>
            <person name="de Haan M."/>
            <person name="Maarse A.C."/>
            <person name="Alcaraz J.-P."/>
            <person name="Cottet A."/>
            <person name="Casacuberta E."/>
            <person name="Monfort A."/>
            <person name="Argiriou A."/>
            <person name="Flores M."/>
            <person name="Liguori R."/>
            <person name="Vitale D."/>
            <person name="Mannhaupt G."/>
            <person name="Haase D."/>
            <person name="Schoof H."/>
            <person name="Rudd S."/>
            <person name="Zaccaria P."/>
            <person name="Mewes H.-W."/>
            <person name="Mayer K.F.X."/>
            <person name="Kaul S."/>
            <person name="Town C.D."/>
            <person name="Koo H.L."/>
            <person name="Tallon L.J."/>
            <person name="Jenkins J."/>
            <person name="Rooney T."/>
            <person name="Rizzo M."/>
            <person name="Walts A."/>
            <person name="Utterback T."/>
            <person name="Fujii C.Y."/>
            <person name="Shea T.P."/>
            <person name="Creasy T.H."/>
            <person name="Haas B."/>
            <person name="Maiti R."/>
            <person name="Wu D."/>
            <person name="Peterson J."/>
            <person name="Van Aken S."/>
            <person name="Pai G."/>
            <person name="Militscher J."/>
            <person name="Sellers P."/>
            <person name="Gill J.E."/>
            <person name="Feldblyum T.V."/>
            <person name="Preuss D."/>
            <person name="Lin X."/>
            <person name="Nierman W.C."/>
            <person name="Salzberg S.L."/>
            <person name="White O."/>
            <person name="Venter J.C."/>
            <person name="Fraser C.M."/>
            <person name="Kaneko T."/>
            <person name="Nakamura Y."/>
            <person name="Sato S."/>
            <person name="Kato T."/>
            <person name="Asamizu E."/>
            <person name="Sasamoto S."/>
            <person name="Kimura T."/>
            <person name="Idesawa K."/>
            <person name="Kawashima K."/>
            <person name="Kishida Y."/>
            <person name="Kiyokawa C."/>
            <person name="Kohara M."/>
            <person name="Matsumoto M."/>
            <person name="Matsuno A."/>
            <person name="Muraki A."/>
            <person name="Nakayama S."/>
            <person name="Nakazaki N."/>
            <person name="Shinpo S."/>
            <person name="Takeuchi C."/>
            <person name="Wada T."/>
            <person name="Watanabe A."/>
            <person name="Yamada M."/>
            <person name="Yasuda M."/>
            <person name="Tabata S."/>
        </authorList>
    </citation>
    <scope>NUCLEOTIDE SEQUENCE [LARGE SCALE GENOMIC DNA]</scope>
    <source>
        <strain>cv. Columbia</strain>
    </source>
</reference>
<reference key="2">
    <citation type="journal article" date="2017" name="Plant J.">
        <title>Araport11: a complete reannotation of the Arabidopsis thaliana reference genome.</title>
        <authorList>
            <person name="Cheng C.Y."/>
            <person name="Krishnakumar V."/>
            <person name="Chan A.P."/>
            <person name="Thibaud-Nissen F."/>
            <person name="Schobel S."/>
            <person name="Town C.D."/>
        </authorList>
    </citation>
    <scope>GENOME REANNOTATION</scope>
    <source>
        <strain>cv. Columbia</strain>
    </source>
</reference>
<reference key="3">
    <citation type="submission" date="2006-07" db="EMBL/GenBank/DDBJ databases">
        <title>Large-scale analysis of RIKEN Arabidopsis full-length (RAFL) cDNAs.</title>
        <authorList>
            <person name="Totoki Y."/>
            <person name="Seki M."/>
            <person name="Ishida J."/>
            <person name="Nakajima M."/>
            <person name="Enju A."/>
            <person name="Kamiya A."/>
            <person name="Narusaka M."/>
            <person name="Shin-i T."/>
            <person name="Nakagawa M."/>
            <person name="Sakamoto N."/>
            <person name="Oishi K."/>
            <person name="Kohara Y."/>
            <person name="Kobayashi M."/>
            <person name="Toyoda A."/>
            <person name="Sakaki Y."/>
            <person name="Sakurai T."/>
            <person name="Iida K."/>
            <person name="Akiyama K."/>
            <person name="Satou M."/>
            <person name="Toyoda T."/>
            <person name="Konagaya A."/>
            <person name="Carninci P."/>
            <person name="Kawai J."/>
            <person name="Hayashizaki Y."/>
            <person name="Shinozaki K."/>
        </authorList>
    </citation>
    <scope>NUCLEOTIDE SEQUENCE [LARGE SCALE MRNA] (ISOFORM 1)</scope>
    <source>
        <strain>cv. Columbia</strain>
    </source>
</reference>
<reference key="4">
    <citation type="submission" date="2007-01" db="EMBL/GenBank/DDBJ databases">
        <title>Arabidopsis ORF clones.</title>
        <authorList>
            <person name="Kim C.J."/>
            <person name="Bautista V.R."/>
            <person name="Chen H."/>
            <person name="De Los Reyes C."/>
            <person name="Wu S.Y."/>
            <person name="Ecker J.R."/>
        </authorList>
    </citation>
    <scope>NUCLEOTIDE SEQUENCE [LARGE SCALE MRNA] (ISOFORM 2)</scope>
    <source>
        <strain>cv. Columbia</strain>
    </source>
</reference>
<reference key="5">
    <citation type="journal article" date="2009" name="Plant Physiol.">
        <title>Large-scale Arabidopsis phosphoproteome profiling reveals novel chloroplast kinase substrates and phosphorylation networks.</title>
        <authorList>
            <person name="Reiland S."/>
            <person name="Messerli G."/>
            <person name="Baerenfaller K."/>
            <person name="Gerrits B."/>
            <person name="Endler A."/>
            <person name="Grossmann J."/>
            <person name="Gruissem W."/>
            <person name="Baginsky S."/>
        </authorList>
    </citation>
    <scope>IDENTIFICATION BY MASS SPECTROMETRY [LARGE SCALE ANALYSIS]</scope>
</reference>
<reference key="6">
    <citation type="journal article" date="2015" name="Front. Plant Sci.">
        <title>The Arabidopsis a zinc finger domain protein ARS1 is essential for seed germination and ROS homeostasis in response to ABA and oxidative stress.</title>
        <authorList>
            <person name="Baek D."/>
            <person name="Cha J.Y."/>
            <person name="Kang S."/>
            <person name="Park B."/>
            <person name="Lee H.J."/>
            <person name="Hong H."/>
            <person name="Chun H.J."/>
            <person name="Kim D.H."/>
            <person name="Kim M.C."/>
            <person name="Lee S.Y."/>
            <person name="Yun D.J."/>
        </authorList>
    </citation>
    <scope>FUNCTION</scope>
    <scope>DISRUPTION PHENOTYPE</scope>
    <scope>SUBCELLULAR LOCATION</scope>
    <scope>TISSUE SPECIFICITY</scope>
    <scope>INDUCTION BY ABSCISIC ACID</scope>
    <source>
        <strain>cv. C24</strain>
        <strain>cv. Columbia</strain>
    </source>
</reference>
<sequence>MDAQAKKKAMFRSKLNAKKKDTRIDSPLVRYNESDQPVCRVCNVVLKSESLWDVHQASRKHHEAIDSLKASAAGVQRGSKPAETRPTKIEALAKSSNSQTSSGLPPNFFENREPARAEVEPAKSKNLEQSKHTIGSETNKSKGPLPAGFFDNQKTDSSNTKTTSEPKQSQTQTTGPETKPMVNGNLPTGFFDNKEADLLAHGIKLVKPDIKDEYKEFEKLIQDDLQVVDSRMEEEEVDAAETIEEEEQREQRSYKEKVEILKRKKMELKAARLAKRSKTSEGSVKKPKKTEEESPSDEEDDEDSAVDWRAQHL</sequence>
<proteinExistence type="evidence at protein level"/>
<name>ARS1_ARATH</name>
<evidence type="ECO:0000255" key="1"/>
<evidence type="ECO:0000255" key="2">
    <source>
        <dbReference type="PROSITE-ProRule" id="PRU00768"/>
    </source>
</evidence>
<evidence type="ECO:0000256" key="3">
    <source>
        <dbReference type="SAM" id="MobiDB-lite"/>
    </source>
</evidence>
<evidence type="ECO:0000269" key="4">
    <source>
    </source>
</evidence>
<evidence type="ECO:0000303" key="5">
    <source>
    </source>
</evidence>
<evidence type="ECO:0000312" key="6">
    <source>
        <dbReference type="Araport" id="AT3G02860"/>
    </source>
</evidence>
<evidence type="ECO:0000312" key="7">
    <source>
        <dbReference type="EMBL" id="AAF26974.1"/>
    </source>
</evidence>
<gene>
    <name evidence="5" type="primary">ARS1</name>
    <name evidence="6" type="ordered locus">At3g02860</name>
    <name evidence="7" type="ORF">F13E7.20</name>
</gene>
<accession>Q9M8S7</accession>
<accession>A2RVV3</accession>
<feature type="chain" id="PRO_0000452700" description="Protein ABA AND ROS SENSITIVE 1">
    <location>
        <begin position="1"/>
        <end position="313"/>
    </location>
</feature>
<feature type="zinc finger region" description="C2H2-type" evidence="1">
    <location>
        <begin position="39"/>
        <end position="61"/>
    </location>
</feature>
<feature type="region of interest" description="Disordered" evidence="3">
    <location>
        <begin position="115"/>
        <end position="189"/>
    </location>
</feature>
<feature type="region of interest" description="Disordered" evidence="3">
    <location>
        <begin position="232"/>
        <end position="254"/>
    </location>
</feature>
<feature type="region of interest" description="Disordered" evidence="3">
    <location>
        <begin position="271"/>
        <end position="313"/>
    </location>
</feature>
<feature type="coiled-coil region" evidence="1">
    <location>
        <begin position="232"/>
        <end position="271"/>
    </location>
</feature>
<feature type="short sequence motif" description="Nuclear localization signal 1" evidence="2">
    <location>
        <begin position="5"/>
        <end position="12"/>
    </location>
</feature>
<feature type="short sequence motif" description="Nuclear localization signal 2" evidence="2">
    <location>
        <begin position="274"/>
        <end position="281"/>
    </location>
</feature>
<feature type="compositionally biased region" description="Basic and acidic residues" evidence="3">
    <location>
        <begin position="115"/>
        <end position="131"/>
    </location>
</feature>
<feature type="compositionally biased region" description="Polar residues" evidence="3">
    <location>
        <begin position="155"/>
        <end position="176"/>
    </location>
</feature>
<feature type="compositionally biased region" description="Acidic residues" evidence="3">
    <location>
        <begin position="232"/>
        <end position="248"/>
    </location>
</feature>
<feature type="compositionally biased region" description="Acidic residues" evidence="3">
    <location>
        <begin position="293"/>
        <end position="305"/>
    </location>
</feature>
<feature type="splice variant" id="VSP_061043" description="In isoform 2.">
    <location>
        <position position="117"/>
    </location>
</feature>
<dbReference type="EMBL" id="AC018363">
    <property type="protein sequence ID" value="AAF26974.1"/>
    <property type="molecule type" value="Genomic_DNA"/>
</dbReference>
<dbReference type="EMBL" id="CP002686">
    <property type="protein sequence ID" value="AEE73867.1"/>
    <property type="molecule type" value="Genomic_DNA"/>
</dbReference>
<dbReference type="EMBL" id="CP002686">
    <property type="protein sequence ID" value="AEE73868.1"/>
    <property type="molecule type" value="Genomic_DNA"/>
</dbReference>
<dbReference type="EMBL" id="AK229101">
    <property type="protein sequence ID" value="BAF00979.1"/>
    <property type="molecule type" value="mRNA"/>
</dbReference>
<dbReference type="EMBL" id="BT030094">
    <property type="protein sequence ID" value="ABN04832.1"/>
    <property type="molecule type" value="mRNA"/>
</dbReference>
<dbReference type="RefSeq" id="NP_566185.1">
    <molecule id="Q9M8S7-2"/>
    <property type="nucleotide sequence ID" value="NM_111154.4"/>
</dbReference>
<dbReference type="RefSeq" id="NP_850505.1">
    <molecule id="Q9M8S7-1"/>
    <property type="nucleotide sequence ID" value="NM_180174.2"/>
</dbReference>
<dbReference type="SMR" id="Q9M8S7"/>
<dbReference type="FunCoup" id="Q9M8S7">
    <property type="interactions" value="1035"/>
</dbReference>
<dbReference type="IntAct" id="Q9M8S7">
    <property type="interactions" value="4"/>
</dbReference>
<dbReference type="STRING" id="3702.Q9M8S7"/>
<dbReference type="iPTMnet" id="Q9M8S7"/>
<dbReference type="PaxDb" id="3702-AT3G02860.2"/>
<dbReference type="ProteomicsDB" id="181696"/>
<dbReference type="ProteomicsDB" id="181707"/>
<dbReference type="EnsemblPlants" id="AT3G02860.1">
    <molecule id="Q9M8S7-2"/>
    <property type="protein sequence ID" value="AT3G02860.1"/>
    <property type="gene ID" value="AT3G02860"/>
</dbReference>
<dbReference type="EnsemblPlants" id="AT3G02860.2">
    <molecule id="Q9M8S7-1"/>
    <property type="protein sequence ID" value="AT3G02860.2"/>
    <property type="gene ID" value="AT3G02860"/>
</dbReference>
<dbReference type="GeneID" id="821212"/>
<dbReference type="Gramene" id="AT3G02860.1">
    <molecule id="Q9M8S7-2"/>
    <property type="protein sequence ID" value="AT3G02860.1"/>
    <property type="gene ID" value="AT3G02860"/>
</dbReference>
<dbReference type="Gramene" id="AT3G02860.2">
    <molecule id="Q9M8S7-1"/>
    <property type="protein sequence ID" value="AT3G02860.2"/>
    <property type="gene ID" value="AT3G02860"/>
</dbReference>
<dbReference type="KEGG" id="ath:AT3G02860"/>
<dbReference type="Araport" id="AT3G02860"/>
<dbReference type="TAIR" id="AT3G02860">
    <property type="gene designation" value="ARS1"/>
</dbReference>
<dbReference type="eggNOG" id="KOG3032">
    <property type="taxonomic scope" value="Eukaryota"/>
</dbReference>
<dbReference type="HOGENOM" id="CLU_058140_1_0_1"/>
<dbReference type="InParanoid" id="Q9M8S7"/>
<dbReference type="OMA" id="KQPPDAQ"/>
<dbReference type="PhylomeDB" id="Q9M8S7"/>
<dbReference type="PRO" id="PR:Q9M8S7"/>
<dbReference type="Proteomes" id="UP000006548">
    <property type="component" value="Chromosome 3"/>
</dbReference>
<dbReference type="ExpressionAtlas" id="Q9M8S7">
    <property type="expression patterns" value="baseline and differential"/>
</dbReference>
<dbReference type="GO" id="GO:0005829">
    <property type="term" value="C:cytosol"/>
    <property type="evidence" value="ECO:0000314"/>
    <property type="project" value="TAIR"/>
</dbReference>
<dbReference type="GO" id="GO:0005634">
    <property type="term" value="C:nucleus"/>
    <property type="evidence" value="ECO:0000314"/>
    <property type="project" value="TAIR"/>
</dbReference>
<dbReference type="GO" id="GO:0005681">
    <property type="term" value="C:spliceosomal complex"/>
    <property type="evidence" value="ECO:0007669"/>
    <property type="project" value="InterPro"/>
</dbReference>
<dbReference type="GO" id="GO:0003676">
    <property type="term" value="F:nucleic acid binding"/>
    <property type="evidence" value="ECO:0007669"/>
    <property type="project" value="InterPro"/>
</dbReference>
<dbReference type="GO" id="GO:0008270">
    <property type="term" value="F:zinc ion binding"/>
    <property type="evidence" value="ECO:0007669"/>
    <property type="project" value="UniProtKB-KW"/>
</dbReference>
<dbReference type="GO" id="GO:0045892">
    <property type="term" value="P:negative regulation of DNA-templated transcription"/>
    <property type="evidence" value="ECO:0000315"/>
    <property type="project" value="TAIR"/>
</dbReference>
<dbReference type="GO" id="GO:1903427">
    <property type="term" value="P:negative regulation of reactive oxygen species biosynthetic process"/>
    <property type="evidence" value="ECO:0000315"/>
    <property type="project" value="TAIR"/>
</dbReference>
<dbReference type="GO" id="GO:0010030">
    <property type="term" value="P:positive regulation of seed germination"/>
    <property type="evidence" value="ECO:0000315"/>
    <property type="project" value="TAIR"/>
</dbReference>
<dbReference type="GO" id="GO:0048838">
    <property type="term" value="P:release of seed from dormancy"/>
    <property type="evidence" value="ECO:0000315"/>
    <property type="project" value="UniProtKB"/>
</dbReference>
<dbReference type="GO" id="GO:0009737">
    <property type="term" value="P:response to abscisic acid"/>
    <property type="evidence" value="ECO:0000315"/>
    <property type="project" value="TAIR"/>
</dbReference>
<dbReference type="GO" id="GO:0042542">
    <property type="term" value="P:response to hydrogen peroxide"/>
    <property type="evidence" value="ECO:0000314"/>
    <property type="project" value="UniProtKB"/>
</dbReference>
<dbReference type="GO" id="GO:0006979">
    <property type="term" value="P:response to oxidative stress"/>
    <property type="evidence" value="ECO:0000314"/>
    <property type="project" value="UniProtKB"/>
</dbReference>
<dbReference type="InterPro" id="IPR040050">
    <property type="entry name" value="ZNF830-like"/>
</dbReference>
<dbReference type="InterPro" id="IPR036236">
    <property type="entry name" value="Znf_C2H2_sf"/>
</dbReference>
<dbReference type="InterPro" id="IPR013087">
    <property type="entry name" value="Znf_C2H2_type"/>
</dbReference>
<dbReference type="PANTHER" id="PTHR13278">
    <property type="entry name" value="ZINC FINGER PROTEIN 830"/>
    <property type="match status" value="1"/>
</dbReference>
<dbReference type="PANTHER" id="PTHR13278:SF0">
    <property type="entry name" value="ZINC FINGER PROTEIN 830"/>
    <property type="match status" value="1"/>
</dbReference>
<dbReference type="Pfam" id="PF12874">
    <property type="entry name" value="zf-met"/>
    <property type="match status" value="1"/>
</dbReference>
<dbReference type="SUPFAM" id="SSF57667">
    <property type="entry name" value="beta-beta-alpha zinc fingers"/>
    <property type="match status" value="1"/>
</dbReference>
<dbReference type="PROSITE" id="PS00028">
    <property type="entry name" value="ZINC_FINGER_C2H2_1"/>
    <property type="match status" value="1"/>
</dbReference>
<comment type="function">
    <text evidence="4">Essential for breaking seed dormancy before seed germination (PubMed:26583028). Prevents reactive oxygen species (ROS) accumulation in response to abscisic acid (ABA) and oxidative stress, probably by repressing the accumulation of ABA-induced ROS-scavenging enzymes (e.g. CSD3) (PubMed:26583028).</text>
</comment>
<comment type="subcellular location">
    <subcellularLocation>
        <location evidence="2 4">Nucleus</location>
    </subcellularLocation>
    <subcellularLocation>
        <location evidence="4">Cytoplasm</location>
    </subcellularLocation>
    <text evidence="4">Translocates from the nucleus to the cytoplasm in response to abscisic acid (ABA) and oxidative stress (e.g. hydrogen peroxide H(2)O(2) and methyl viologen (MV)).</text>
</comment>
<comment type="alternative products">
    <event type="alternative splicing"/>
    <isoform>
        <id>Q9M8S7-1</id>
        <name>1</name>
        <sequence type="displayed"/>
    </isoform>
    <isoform>
        <id>Q9M8S7-2</id>
        <name>2</name>
        <sequence type="described" ref="VSP_061043"/>
    </isoform>
</comment>
<comment type="tissue specificity">
    <text evidence="4">Mostly expressed in siliques and, to a lower extent, in roots (PubMed:26583028). Barely deteclable in leaves and stems (PubMed:26583028).</text>
</comment>
<comment type="induction">
    <text evidence="4">Slightly induced by abscisic acid (ABA).</text>
</comment>
<comment type="disruption phenotype">
    <text evidence="4">Hypersensitivity to abscisic acid (ABA) during seed germination and to methyl viologen (MV) at the seedling stage, associated with a reduced expression of the superoxide dismutase CSD3 and an enhanced accumulation of reactive oxygen species (ROS) after ABA treatment.</text>
</comment>
<keyword id="KW-0025">Alternative splicing</keyword>
<keyword id="KW-0175">Coiled coil</keyword>
<keyword id="KW-0963">Cytoplasm</keyword>
<keyword id="KW-0479">Metal-binding</keyword>
<keyword id="KW-0539">Nucleus</keyword>
<keyword id="KW-1185">Reference proteome</keyword>
<keyword id="KW-0678">Repressor</keyword>
<keyword id="KW-0346">Stress response</keyword>
<keyword id="KW-0804">Transcription</keyword>
<keyword id="KW-0805">Transcription regulation</keyword>
<keyword id="KW-0862">Zinc</keyword>
<keyword id="KW-0863">Zinc-finger</keyword>